<sequence length="173" mass="19908">MSMSANTMIFMILGASVVMAIACLMDMNALLDRFHNYILPHLRGEDRVCHCNCGRHHIHYVIPYDGDQSVVDASENYFVTDSVTKQEIDLMLGLLLGFCISWFLVWMDGVLHCAVRAWRAGRRYDGSWTWLPKLCSLRELGRRPHRPFEEAAGNMVHVKQKLYHNGHPSPRHL</sequence>
<gene>
    <name type="primary">TMEM240</name>
    <name type="synonym">C1orf70</name>
</gene>
<evidence type="ECO:0000250" key="1">
    <source>
        <dbReference type="UniProtKB" id="B2RWJ3"/>
    </source>
</evidence>
<evidence type="ECO:0000255" key="2"/>
<evidence type="ECO:0000269" key="3">
    <source>
    </source>
</evidence>
<evidence type="ECO:0000269" key="4">
    <source>
    </source>
</evidence>
<evidence type="ECO:0000305" key="5"/>
<organism>
    <name type="scientific">Homo sapiens</name>
    <name type="common">Human</name>
    <dbReference type="NCBI Taxonomy" id="9606"/>
    <lineage>
        <taxon>Eukaryota</taxon>
        <taxon>Metazoa</taxon>
        <taxon>Chordata</taxon>
        <taxon>Craniata</taxon>
        <taxon>Vertebrata</taxon>
        <taxon>Euteleostomi</taxon>
        <taxon>Mammalia</taxon>
        <taxon>Eutheria</taxon>
        <taxon>Euarchontoglires</taxon>
        <taxon>Primates</taxon>
        <taxon>Haplorrhini</taxon>
        <taxon>Catarrhini</taxon>
        <taxon>Hominidae</taxon>
        <taxon>Homo</taxon>
    </lineage>
</organism>
<accession>Q5SV17</accession>
<accession>B9EJG7</accession>
<name>TM240_HUMAN</name>
<dbReference type="EMBL" id="AL645728">
    <property type="status" value="NOT_ANNOTATED_CDS"/>
    <property type="molecule type" value="Genomic_DNA"/>
</dbReference>
<dbReference type="EMBL" id="BC147018">
    <property type="protein sequence ID" value="AAI47019.1"/>
    <property type="molecule type" value="mRNA"/>
</dbReference>
<dbReference type="EMBL" id="BC147020">
    <property type="protein sequence ID" value="AAI47021.1"/>
    <property type="molecule type" value="mRNA"/>
</dbReference>
<dbReference type="CCDS" id="CCDS44040.1"/>
<dbReference type="RefSeq" id="NP_001108220.1">
    <property type="nucleotide sequence ID" value="NM_001114748.2"/>
</dbReference>
<dbReference type="FunCoup" id="Q5SV17">
    <property type="interactions" value="15"/>
</dbReference>
<dbReference type="STRING" id="9606.ENSP00000368007"/>
<dbReference type="iPTMnet" id="Q5SV17"/>
<dbReference type="PhosphoSitePlus" id="Q5SV17"/>
<dbReference type="BioMuta" id="TMEM240"/>
<dbReference type="DMDM" id="190358728"/>
<dbReference type="MassIVE" id="Q5SV17"/>
<dbReference type="PaxDb" id="9606-ENSP00000368007"/>
<dbReference type="PeptideAtlas" id="Q5SV17"/>
<dbReference type="Antibodypedia" id="77999">
    <property type="antibodies" value="34 antibodies from 9 providers"/>
</dbReference>
<dbReference type="DNASU" id="339453"/>
<dbReference type="Ensembl" id="ENST00000378733.9">
    <property type="protein sequence ID" value="ENSP00000368007.4"/>
    <property type="gene ID" value="ENSG00000205090.10"/>
</dbReference>
<dbReference type="GeneID" id="339453"/>
<dbReference type="KEGG" id="hsa:339453"/>
<dbReference type="MANE-Select" id="ENST00000378733.9">
    <property type="protein sequence ID" value="ENSP00000368007.4"/>
    <property type="RefSeq nucleotide sequence ID" value="NM_001114748.2"/>
    <property type="RefSeq protein sequence ID" value="NP_001108220.1"/>
</dbReference>
<dbReference type="UCSC" id="uc009vkf.4">
    <property type="organism name" value="human"/>
</dbReference>
<dbReference type="AGR" id="HGNC:25186"/>
<dbReference type="CTD" id="339453"/>
<dbReference type="DisGeNET" id="339453"/>
<dbReference type="GeneCards" id="TMEM240"/>
<dbReference type="HGNC" id="HGNC:25186">
    <property type="gene designation" value="TMEM240"/>
</dbReference>
<dbReference type="HPA" id="ENSG00000205090">
    <property type="expression patterns" value="Tissue enhanced (brain)"/>
</dbReference>
<dbReference type="MalaCards" id="TMEM240"/>
<dbReference type="MIM" id="607454">
    <property type="type" value="phenotype"/>
</dbReference>
<dbReference type="MIM" id="616101">
    <property type="type" value="gene"/>
</dbReference>
<dbReference type="neXtProt" id="NX_Q5SV17"/>
<dbReference type="OpenTargets" id="ENSG00000205090"/>
<dbReference type="Orphanet" id="98773">
    <property type="disease" value="Spinocerebellar ataxia type 21"/>
</dbReference>
<dbReference type="PharmGKB" id="PA142672520"/>
<dbReference type="VEuPathDB" id="HostDB:ENSG00000205090"/>
<dbReference type="eggNOG" id="ENOG502QWKH">
    <property type="taxonomic scope" value="Eukaryota"/>
</dbReference>
<dbReference type="GeneTree" id="ENSGT00400000023987"/>
<dbReference type="HOGENOM" id="CLU_145117_0_0_1"/>
<dbReference type="InParanoid" id="Q5SV17"/>
<dbReference type="OMA" id="HHSQYDE"/>
<dbReference type="OrthoDB" id="9922101at2759"/>
<dbReference type="PAN-GO" id="Q5SV17">
    <property type="GO annotations" value="1 GO annotation based on evolutionary models"/>
</dbReference>
<dbReference type="PhylomeDB" id="Q5SV17"/>
<dbReference type="PathwayCommons" id="Q5SV17"/>
<dbReference type="BioGRID-ORCS" id="339453">
    <property type="hits" value="93 hits in 1146 CRISPR screens"/>
</dbReference>
<dbReference type="GenomeRNAi" id="339453"/>
<dbReference type="Pharos" id="Q5SV17">
    <property type="development level" value="Tdark"/>
</dbReference>
<dbReference type="PRO" id="PR:Q5SV17"/>
<dbReference type="Proteomes" id="UP000005640">
    <property type="component" value="Chromosome 1"/>
</dbReference>
<dbReference type="RNAct" id="Q5SV17">
    <property type="molecule type" value="protein"/>
</dbReference>
<dbReference type="Bgee" id="ENSG00000205090">
    <property type="expression patterns" value="Expressed in right hemisphere of cerebellum and 91 other cell types or tissues"/>
</dbReference>
<dbReference type="ExpressionAtlas" id="Q5SV17">
    <property type="expression patterns" value="baseline and differential"/>
</dbReference>
<dbReference type="GO" id="GO:0150053">
    <property type="term" value="C:cerebellar climbing fiber to Purkinje cell synapse"/>
    <property type="evidence" value="ECO:0007669"/>
    <property type="project" value="Ensembl"/>
</dbReference>
<dbReference type="GO" id="GO:0098688">
    <property type="term" value="C:parallel fiber to Purkinje cell synapse"/>
    <property type="evidence" value="ECO:0007669"/>
    <property type="project" value="Ensembl"/>
</dbReference>
<dbReference type="GO" id="GO:0098839">
    <property type="term" value="C:postsynaptic density membrane"/>
    <property type="evidence" value="ECO:0007669"/>
    <property type="project" value="Ensembl"/>
</dbReference>
<dbReference type="GO" id="GO:0097060">
    <property type="term" value="C:synaptic membrane"/>
    <property type="evidence" value="ECO:0000250"/>
    <property type="project" value="UniProtKB"/>
</dbReference>
<dbReference type="GO" id="GO:0160045">
    <property type="term" value="C:TMEM240-body"/>
    <property type="evidence" value="ECO:0007669"/>
    <property type="project" value="Ensembl"/>
</dbReference>
<dbReference type="InterPro" id="IPR027947">
    <property type="entry name" value="TMEM240"/>
</dbReference>
<dbReference type="PANTHER" id="PTHR28666">
    <property type="entry name" value="TRANSMEMBRANE PROTEIN 240"/>
    <property type="match status" value="1"/>
</dbReference>
<dbReference type="PANTHER" id="PTHR28666:SF1">
    <property type="entry name" value="TRANSMEMBRANE PROTEIN 240"/>
    <property type="match status" value="1"/>
</dbReference>
<dbReference type="Pfam" id="PF15207">
    <property type="entry name" value="TMEM240"/>
    <property type="match status" value="1"/>
</dbReference>
<comment type="subcellular location">
    <subcellularLocation>
        <location evidence="1">Synapse</location>
    </subcellularLocation>
    <subcellularLocation>
        <location evidence="5">Cell membrane</location>
        <topology evidence="5">Multi-pass membrane protein</topology>
    </subcellularLocation>
</comment>
<comment type="disease" evidence="3 4">
    <disease id="DI-04256">
        <name>Spinocerebellar ataxia 21</name>
        <acronym>SCA21</acronym>
        <description>A form of spinocerebellar ataxia, a clinically and genetically heterogeneous group of cerebellar disorders. Patients show progressive incoordination of gait and often poor coordination of hands, speech and eye movements, due to degeneration of the cerebellum with variable involvement of the brainstem and spinal cord. SCA21 is characterized by onset in the first decades of life of slowly progressive relatively mild cerebellar ataxia associated with slight extrapyramidal features predominant in older patients and cognitive impairment predominant in younger patients.</description>
        <dbReference type="MIM" id="607454"/>
    </disease>
    <text>The disease is caused by variants affecting the gene represented in this entry.</text>
</comment>
<comment type="similarity">
    <text evidence="5">Belongs to the TMEM240 family.</text>
</comment>
<feature type="chain" id="PRO_0000340728" description="Transmembrane protein 240">
    <location>
        <begin position="1"/>
        <end position="173"/>
    </location>
</feature>
<feature type="transmembrane region" description="Helical" evidence="2">
    <location>
        <begin position="5"/>
        <end position="25"/>
    </location>
</feature>
<feature type="transmembrane region" description="Helical" evidence="2">
    <location>
        <begin position="90"/>
        <end position="110"/>
    </location>
</feature>
<feature type="modified residue" description="Phosphoserine" evidence="1">
    <location>
        <position position="169"/>
    </location>
</feature>
<feature type="sequence variant" id="VAR_071906" description="In SCA21; dbSNP:rs606231454." evidence="3 4">
    <original>T</original>
    <variation>M</variation>
    <location>
        <position position="80"/>
    </location>
</feature>
<feature type="sequence variant" id="VAR_071907" description="In SCA21; dbSNP:rs606231453." evidence="3">
    <original>R</original>
    <variation>C</variation>
    <location>
        <position position="116"/>
    </location>
</feature>
<feature type="sequence variant" id="VAR_071908" description="In SCA21; dbSNP:rs546291208." evidence="3">
    <original>E</original>
    <variation>K</variation>
    <location>
        <position position="149"/>
    </location>
</feature>
<feature type="sequence variant" id="VAR_071909" description="In SCA21; dbSNP:rs606231451." evidence="3">
    <original>P</original>
    <variation>L</variation>
    <location>
        <position position="170"/>
    </location>
</feature>
<feature type="sequence variant" id="VAR_071910" description="In SCA21; dbSNP:rs606231455." evidence="3">
    <original>R</original>
    <variation>W</variation>
    <location>
        <position position="171"/>
    </location>
</feature>
<keyword id="KW-1003">Cell membrane</keyword>
<keyword id="KW-0225">Disease variant</keyword>
<keyword id="KW-0991">Intellectual disability</keyword>
<keyword id="KW-0472">Membrane</keyword>
<keyword id="KW-0523">Neurodegeneration</keyword>
<keyword id="KW-0597">Phosphoprotein</keyword>
<keyword id="KW-1267">Proteomics identification</keyword>
<keyword id="KW-1185">Reference proteome</keyword>
<keyword id="KW-0950">Spinocerebellar ataxia</keyword>
<keyword id="KW-0770">Synapse</keyword>
<keyword id="KW-0812">Transmembrane</keyword>
<keyword id="KW-1133">Transmembrane helix</keyword>
<protein>
    <recommendedName>
        <fullName>Transmembrane protein 240</fullName>
    </recommendedName>
</protein>
<proteinExistence type="evidence at protein level"/>
<reference key="1">
    <citation type="journal article" date="2006" name="Nature">
        <title>The DNA sequence and biological annotation of human chromosome 1.</title>
        <authorList>
            <person name="Gregory S.G."/>
            <person name="Barlow K.F."/>
            <person name="McLay K.E."/>
            <person name="Kaul R."/>
            <person name="Swarbreck D."/>
            <person name="Dunham A."/>
            <person name="Scott C.E."/>
            <person name="Howe K.L."/>
            <person name="Woodfine K."/>
            <person name="Spencer C.C.A."/>
            <person name="Jones M.C."/>
            <person name="Gillson C."/>
            <person name="Searle S."/>
            <person name="Zhou Y."/>
            <person name="Kokocinski F."/>
            <person name="McDonald L."/>
            <person name="Evans R."/>
            <person name="Phillips K."/>
            <person name="Atkinson A."/>
            <person name="Cooper R."/>
            <person name="Jones C."/>
            <person name="Hall R.E."/>
            <person name="Andrews T.D."/>
            <person name="Lloyd C."/>
            <person name="Ainscough R."/>
            <person name="Almeida J.P."/>
            <person name="Ambrose K.D."/>
            <person name="Anderson F."/>
            <person name="Andrew R.W."/>
            <person name="Ashwell R.I.S."/>
            <person name="Aubin K."/>
            <person name="Babbage A.K."/>
            <person name="Bagguley C.L."/>
            <person name="Bailey J."/>
            <person name="Beasley H."/>
            <person name="Bethel G."/>
            <person name="Bird C.P."/>
            <person name="Bray-Allen S."/>
            <person name="Brown J.Y."/>
            <person name="Brown A.J."/>
            <person name="Buckley D."/>
            <person name="Burton J."/>
            <person name="Bye J."/>
            <person name="Carder C."/>
            <person name="Chapman J.C."/>
            <person name="Clark S.Y."/>
            <person name="Clarke G."/>
            <person name="Clee C."/>
            <person name="Cobley V."/>
            <person name="Collier R.E."/>
            <person name="Corby N."/>
            <person name="Coville G.J."/>
            <person name="Davies J."/>
            <person name="Deadman R."/>
            <person name="Dunn M."/>
            <person name="Earthrowl M."/>
            <person name="Ellington A.G."/>
            <person name="Errington H."/>
            <person name="Frankish A."/>
            <person name="Frankland J."/>
            <person name="French L."/>
            <person name="Garner P."/>
            <person name="Garnett J."/>
            <person name="Gay L."/>
            <person name="Ghori M.R.J."/>
            <person name="Gibson R."/>
            <person name="Gilby L.M."/>
            <person name="Gillett W."/>
            <person name="Glithero R.J."/>
            <person name="Grafham D.V."/>
            <person name="Griffiths C."/>
            <person name="Griffiths-Jones S."/>
            <person name="Grocock R."/>
            <person name="Hammond S."/>
            <person name="Harrison E.S.I."/>
            <person name="Hart E."/>
            <person name="Haugen E."/>
            <person name="Heath P.D."/>
            <person name="Holmes S."/>
            <person name="Holt K."/>
            <person name="Howden P.J."/>
            <person name="Hunt A.R."/>
            <person name="Hunt S.E."/>
            <person name="Hunter G."/>
            <person name="Isherwood J."/>
            <person name="James R."/>
            <person name="Johnson C."/>
            <person name="Johnson D."/>
            <person name="Joy A."/>
            <person name="Kay M."/>
            <person name="Kershaw J.K."/>
            <person name="Kibukawa M."/>
            <person name="Kimberley A.M."/>
            <person name="King A."/>
            <person name="Knights A.J."/>
            <person name="Lad H."/>
            <person name="Laird G."/>
            <person name="Lawlor S."/>
            <person name="Leongamornlert D.A."/>
            <person name="Lloyd D.M."/>
            <person name="Loveland J."/>
            <person name="Lovell J."/>
            <person name="Lush M.J."/>
            <person name="Lyne R."/>
            <person name="Martin S."/>
            <person name="Mashreghi-Mohammadi M."/>
            <person name="Matthews L."/>
            <person name="Matthews N.S.W."/>
            <person name="McLaren S."/>
            <person name="Milne S."/>
            <person name="Mistry S."/>
            <person name="Moore M.J.F."/>
            <person name="Nickerson T."/>
            <person name="O'Dell C.N."/>
            <person name="Oliver K."/>
            <person name="Palmeiri A."/>
            <person name="Palmer S.A."/>
            <person name="Parker A."/>
            <person name="Patel D."/>
            <person name="Pearce A.V."/>
            <person name="Peck A.I."/>
            <person name="Pelan S."/>
            <person name="Phelps K."/>
            <person name="Phillimore B.J."/>
            <person name="Plumb R."/>
            <person name="Rajan J."/>
            <person name="Raymond C."/>
            <person name="Rouse G."/>
            <person name="Saenphimmachak C."/>
            <person name="Sehra H.K."/>
            <person name="Sheridan E."/>
            <person name="Shownkeen R."/>
            <person name="Sims S."/>
            <person name="Skuce C.D."/>
            <person name="Smith M."/>
            <person name="Steward C."/>
            <person name="Subramanian S."/>
            <person name="Sycamore N."/>
            <person name="Tracey A."/>
            <person name="Tromans A."/>
            <person name="Van Helmond Z."/>
            <person name="Wall M."/>
            <person name="Wallis J.M."/>
            <person name="White S."/>
            <person name="Whitehead S.L."/>
            <person name="Wilkinson J.E."/>
            <person name="Willey D.L."/>
            <person name="Williams H."/>
            <person name="Wilming L."/>
            <person name="Wray P.W."/>
            <person name="Wu Z."/>
            <person name="Coulson A."/>
            <person name="Vaudin M."/>
            <person name="Sulston J.E."/>
            <person name="Durbin R.M."/>
            <person name="Hubbard T."/>
            <person name="Wooster R."/>
            <person name="Dunham I."/>
            <person name="Carter N.P."/>
            <person name="McVean G."/>
            <person name="Ross M.T."/>
            <person name="Harrow J."/>
            <person name="Olson M.V."/>
            <person name="Beck S."/>
            <person name="Rogers J."/>
            <person name="Bentley D.R."/>
        </authorList>
    </citation>
    <scope>NUCLEOTIDE SEQUENCE [LARGE SCALE GENOMIC DNA]</scope>
</reference>
<reference key="2">
    <citation type="journal article" date="2004" name="Genome Res.">
        <title>The status, quality, and expansion of the NIH full-length cDNA project: the Mammalian Gene Collection (MGC).</title>
        <authorList>
            <consortium name="The MGC Project Team"/>
        </authorList>
    </citation>
    <scope>NUCLEOTIDE SEQUENCE [LARGE SCALE MRNA]</scope>
</reference>
<reference key="3">
    <citation type="journal article" date="2014" name="Brain">
        <title>TMEM240 mutations cause spinocerebellar ataxia 21 with mental retardation and severe cognitive impairment.</title>
        <authorList>
            <person name="Delplanque J."/>
            <person name="Devos D."/>
            <person name="Huin V."/>
            <person name="Genet A."/>
            <person name="Sand O."/>
            <person name="Moreau C."/>
            <person name="Goizet C."/>
            <person name="Charles P."/>
            <person name="Anheim M."/>
            <person name="Monin M.L."/>
            <person name="Buee L."/>
            <person name="Destee A."/>
            <person name="Grolez G."/>
            <person name="Delmaire C."/>
            <person name="Dujardin K."/>
            <person name="Dellacherie D."/>
            <person name="Brice A."/>
            <person name="Stevanin G."/>
            <person name="Strubi-Vuillaume I."/>
            <person name="Duerr A."/>
            <person name="Sablonniere B."/>
        </authorList>
    </citation>
    <scope>INVOLVEMENT IN SCA21</scope>
    <scope>VARIANTS SCA21 MET-80; CYS-116; LYS-149; LEU-170 AND TRP-171</scope>
</reference>
<reference key="4">
    <citation type="journal article" date="2017" name="Brain">
        <title>Exome sequencing and network analysis identifies shared mechanisms underlying spinocerebellar ataxia.</title>
        <authorList>
            <person name="Nibbeling E.A.R."/>
            <person name="Duarri A."/>
            <person name="Verschuuren-Bemelmans C.C."/>
            <person name="Fokkens M.R."/>
            <person name="Karjalainen J.M."/>
            <person name="Smeets C.J.L.M."/>
            <person name="de Boer-Bergsma J.J."/>
            <person name="van der Vries G."/>
            <person name="Dooijes D."/>
            <person name="Bampi G.B."/>
            <person name="van Diemen C."/>
            <person name="Brunt E."/>
            <person name="Ippel E."/>
            <person name="Kremer B."/>
            <person name="Vlak M."/>
            <person name="Adir N."/>
            <person name="Wijmenga C."/>
            <person name="van de Warrenburg B.P.C."/>
            <person name="Franke L."/>
            <person name="Sinke R.J."/>
            <person name="Verbeek D.S."/>
        </authorList>
    </citation>
    <scope>VARIANT SCA21 MET-80</scope>
</reference>